<gene>
    <name type="primary">RSE1</name>
    <name type="ORF">MGG_06457</name>
</gene>
<keyword id="KW-0507">mRNA processing</keyword>
<keyword id="KW-0508">mRNA splicing</keyword>
<keyword id="KW-0539">Nucleus</keyword>
<keyword id="KW-1185">Reference proteome</keyword>
<keyword id="KW-0747">Spliceosome</keyword>
<name>RSE1_PYRO7</name>
<sequence length="1216" mass="134472">MATTSNMFLYSLSIQPPSTITRAILGQFSGTKEQQIVAASGSRLTLYRPDPTQGKVVPLMSHDVFGIIRDLASFRLAGSSKDYLIIASDSGRITIVEYLPAQNRFSRIHLETFGKSGVRRVVPGQYLAADPKGRACLIASVERCKLVYVLNRNSQAELTISSPLEAHKNGTLTLSLVALDVGYSNPVFAALEVDYSEVDQDPKGDAAQNVETVLNYYELDLGLNHVVRKWFDVVDSTASMLFQVPGGSDGPSGVLVCGEENITYRHSNQDAFRVPIPRRKGATEDPSRKRNIVSGVMHKLKGSAGAFFFLLQTEDGDLFKVTIDMVEDAEGNPTGEVRRLKIKYFDTIPVSNNLCILKSGFLFVASEFGNHLFYQFEKLGDDDEELEFFSSDFPVDPKEPYEPVYFYPRPTENLALVESIDSMNPLMDLKVANLTEEDAPQIYTVSGKGARSTFRMLKHGLEVNEIVASQLPGTPSAVWTTKLRRDDEYDAYIVLSFTNGTLVLSIGETVEEVSDTGFLSSVPTLAVQQLGDDGLVQVHPKGIRHIRNGVVNEWSSPQHRSIVAAATNERQVAVALSSGEIVYFEMDTDGSLAEYDEKKEMFGTVTSLSLGEVPEGRLRSSYLAVGCDDCTVRILSLDPESTLESKSVQALTAAPSALSIMSMEDSSSGGTTLYLHIGLNSGVYLRTVLDEVTGELTDTRQKFLGPKAVRLFQVSVQKRTCVLALSSRSWLGFSDPVTKGFTMTPLNYEELEWGWNFVSEQCEEGMVGVNGQFLRIFAIEKLGDNVIQKSIPLTYTPRKLAKHPTQRIFYTIEADNNTLAPELREQLMAAPTAVNGDARVLPPDEFGYPRGNGRWASCISVVDPLGDGEELEPGVVQRIDLDNNEAALSMAVVSFASQDGESFLVVGTGKDMVVNPRRFTEGYIHVYRFSEDGRELEFIHKTKVEEPPTALLPFQGRLVAGIGRMLRIYDLGLRQLLRKAQAEVAPQLIVSLNTQGSRIIVGDVQHGLIYVAYKSETNRLIPFADDTIARWTTCTTMVDYDSTAGADKFGNLWILRCPEKASQESDEPGSEVHLVHSRDYLHGTSNRLALMAHVYTQDIPTSICKTNLVVGGQEVLLWGGFQGTIGVLIPFVSREDADFFQSLEQHLRSEDPPLAGRDHLMYRGCYVPVKGVIDGDLCERYTMLPNDKKQMIAGELDRSVREIERKISDIRTRSAF</sequence>
<comment type="function">
    <text evidence="1">Involved in pre-mRNA splicing and cell cycle control.</text>
</comment>
<comment type="subunit">
    <text evidence="1">Associated with the spliceosome.</text>
</comment>
<comment type="subcellular location">
    <subcellularLocation>
        <location evidence="1">Nucleus</location>
    </subcellularLocation>
</comment>
<comment type="similarity">
    <text evidence="2">Belongs to the RSE1 family.</text>
</comment>
<proteinExistence type="inferred from homology"/>
<dbReference type="EMBL" id="CM001234">
    <property type="protein sequence ID" value="EHA50790.1"/>
    <property type="molecule type" value="Genomic_DNA"/>
</dbReference>
<dbReference type="RefSeq" id="XP_003717109.1">
    <property type="nucleotide sequence ID" value="XM_003717061.1"/>
</dbReference>
<dbReference type="SMR" id="Q52E49"/>
<dbReference type="FunCoup" id="Q52E49">
    <property type="interactions" value="1290"/>
</dbReference>
<dbReference type="STRING" id="242507.Q52E49"/>
<dbReference type="EnsemblFungi" id="MGG_06457T0">
    <property type="protein sequence ID" value="MGG_06457T0"/>
    <property type="gene ID" value="MGG_06457"/>
</dbReference>
<dbReference type="GeneID" id="2684612"/>
<dbReference type="KEGG" id="mgr:MGG_06457"/>
<dbReference type="VEuPathDB" id="FungiDB:MGG_06457"/>
<dbReference type="eggNOG" id="KOG1898">
    <property type="taxonomic scope" value="Eukaryota"/>
</dbReference>
<dbReference type="HOGENOM" id="CLU_003246_0_0_1"/>
<dbReference type="InParanoid" id="Q52E49"/>
<dbReference type="OMA" id="PRATGHW"/>
<dbReference type="OrthoDB" id="436637at2759"/>
<dbReference type="Proteomes" id="UP000009058">
    <property type="component" value="Chromosome 4"/>
</dbReference>
<dbReference type="GO" id="GO:0005681">
    <property type="term" value="C:spliceosomal complex"/>
    <property type="evidence" value="ECO:0007669"/>
    <property type="project" value="UniProtKB-KW"/>
</dbReference>
<dbReference type="GO" id="GO:0003676">
    <property type="term" value="F:nucleic acid binding"/>
    <property type="evidence" value="ECO:0007669"/>
    <property type="project" value="InterPro"/>
</dbReference>
<dbReference type="GO" id="GO:0006397">
    <property type="term" value="P:mRNA processing"/>
    <property type="evidence" value="ECO:0007669"/>
    <property type="project" value="UniProtKB-KW"/>
</dbReference>
<dbReference type="GO" id="GO:0008380">
    <property type="term" value="P:RNA splicing"/>
    <property type="evidence" value="ECO:0007669"/>
    <property type="project" value="UniProtKB-KW"/>
</dbReference>
<dbReference type="FunFam" id="2.130.10.10:FF:001143">
    <property type="entry name" value="Pre-mRNA-splicing factor rse-1, putative"/>
    <property type="match status" value="1"/>
</dbReference>
<dbReference type="FunFam" id="2.130.10.10:FF:000068">
    <property type="entry name" value="Pre-mRNA-splicing factor rse1, variant"/>
    <property type="match status" value="1"/>
</dbReference>
<dbReference type="Gene3D" id="2.130.10.10">
    <property type="entry name" value="YVTN repeat-like/Quinoprotein amine dehydrogenase"/>
    <property type="match status" value="3"/>
</dbReference>
<dbReference type="InterPro" id="IPR018846">
    <property type="entry name" value="Beta-prop_RSE1/DDB1/CPSF1_1st"/>
</dbReference>
<dbReference type="InterPro" id="IPR004871">
    <property type="entry name" value="Cleavage/polyA-sp_fac_asu_C"/>
</dbReference>
<dbReference type="InterPro" id="IPR050358">
    <property type="entry name" value="RSE1/DDB1/CFT1/CPSF1"/>
</dbReference>
<dbReference type="InterPro" id="IPR015943">
    <property type="entry name" value="WD40/YVTN_repeat-like_dom_sf"/>
</dbReference>
<dbReference type="InterPro" id="IPR036322">
    <property type="entry name" value="WD40_repeat_dom_sf"/>
</dbReference>
<dbReference type="PANTHER" id="PTHR10644">
    <property type="entry name" value="DNA REPAIR/RNA PROCESSING CPSF FAMILY"/>
    <property type="match status" value="1"/>
</dbReference>
<dbReference type="Pfam" id="PF10433">
    <property type="entry name" value="Beta-prop_RSE1_1st"/>
    <property type="match status" value="1"/>
</dbReference>
<dbReference type="Pfam" id="PF23726">
    <property type="entry name" value="Beta-prop_RSE1_2nd"/>
    <property type="match status" value="1"/>
</dbReference>
<dbReference type="Pfam" id="PF03178">
    <property type="entry name" value="CPSF_A"/>
    <property type="match status" value="1"/>
</dbReference>
<dbReference type="SUPFAM" id="SSF50978">
    <property type="entry name" value="WD40 repeat-like"/>
    <property type="match status" value="1"/>
</dbReference>
<evidence type="ECO:0000250" key="1"/>
<evidence type="ECO:0000305" key="2"/>
<reference key="1">
    <citation type="journal article" date="2005" name="Nature">
        <title>The genome sequence of the rice blast fungus Magnaporthe grisea.</title>
        <authorList>
            <person name="Dean R.A."/>
            <person name="Talbot N.J."/>
            <person name="Ebbole D.J."/>
            <person name="Farman M.L."/>
            <person name="Mitchell T.K."/>
            <person name="Orbach M.J."/>
            <person name="Thon M.R."/>
            <person name="Kulkarni R."/>
            <person name="Xu J.-R."/>
            <person name="Pan H."/>
            <person name="Read N.D."/>
            <person name="Lee Y.-H."/>
            <person name="Carbone I."/>
            <person name="Brown D."/>
            <person name="Oh Y.Y."/>
            <person name="Donofrio N."/>
            <person name="Jeong J.S."/>
            <person name="Soanes D.M."/>
            <person name="Djonovic S."/>
            <person name="Kolomiets E."/>
            <person name="Rehmeyer C."/>
            <person name="Li W."/>
            <person name="Harding M."/>
            <person name="Kim S."/>
            <person name="Lebrun M.-H."/>
            <person name="Bohnert H."/>
            <person name="Coughlan S."/>
            <person name="Butler J."/>
            <person name="Calvo S.E."/>
            <person name="Ma L.-J."/>
            <person name="Nicol R."/>
            <person name="Purcell S."/>
            <person name="Nusbaum C."/>
            <person name="Galagan J.E."/>
            <person name="Birren B.W."/>
        </authorList>
    </citation>
    <scope>NUCLEOTIDE SEQUENCE [LARGE SCALE GENOMIC DNA]</scope>
    <source>
        <strain>70-15 / ATCC MYA-4617 / FGSC 8958</strain>
    </source>
</reference>
<accession>Q52E49</accession>
<accession>A4R8J5</accession>
<accession>G4N780</accession>
<feature type="chain" id="PRO_0000218633" description="Pre-mRNA-splicing factor RSE1">
    <location>
        <begin position="1"/>
        <end position="1216"/>
    </location>
</feature>
<organism>
    <name type="scientific">Pyricularia oryzae (strain 70-15 / ATCC MYA-4617 / FGSC 8958)</name>
    <name type="common">Rice blast fungus</name>
    <name type="synonym">Magnaporthe oryzae</name>
    <dbReference type="NCBI Taxonomy" id="242507"/>
    <lineage>
        <taxon>Eukaryota</taxon>
        <taxon>Fungi</taxon>
        <taxon>Dikarya</taxon>
        <taxon>Ascomycota</taxon>
        <taxon>Pezizomycotina</taxon>
        <taxon>Sordariomycetes</taxon>
        <taxon>Sordariomycetidae</taxon>
        <taxon>Magnaporthales</taxon>
        <taxon>Pyriculariaceae</taxon>
        <taxon>Pyricularia</taxon>
    </lineage>
</organism>
<protein>
    <recommendedName>
        <fullName>Pre-mRNA-splicing factor RSE1</fullName>
    </recommendedName>
</protein>